<sequence>MHGIEQPQLPLDYVHRCASTSFLLASLDGLLSEARELSGPLALITSSYYLLVSIALCWAIPGSFWYRPGCWLQPVSGRNLIFCGPTEALQRFRLYAARLGLVLSENCPRHGQSAAITLQSYWALPNNIWMDMAQLDLLTFSMPIANTFAYLADCEARFPPIVEGVGSAYYVPTLLGLTHQDPRLYLALRRRNLDLSGEPHRVRPGVLESMALLCSSVRSTSRSRQIPPLYGSVLHHVLGLAERDCILFDTDSNYSSYTHRVLEQDRNRADQSLFSIDLEYVHDLELIALGYSDEDDEDLDNFF</sequence>
<name>P0_PEMVW</name>
<protein>
    <recommendedName>
        <fullName>Suppressor of silencing P0</fullName>
    </recommendedName>
    <alternativeName>
        <fullName>ORF0 protein</fullName>
    </alternativeName>
</protein>
<feature type="chain" id="PRO_0000390914" description="Suppressor of silencing P0">
    <location>
        <begin position="1"/>
        <end position="303"/>
    </location>
</feature>
<evidence type="ECO:0000305" key="1"/>
<reference key="1">
    <citation type="journal article" date="1991" name="J. Gen. Virol.">
        <title>The nucleotide sequence and luteovirus-like nature of RNA 1 of an aphid non-transmissible strain of pea enation mosaic virus.</title>
        <authorList>
            <person name="Demler S.A."/>
            <person name="de Zoeten G.A."/>
        </authorList>
    </citation>
    <scope>NUCLEOTIDE SEQUENCE [GENOMIC RNA]</scope>
</reference>
<proteinExistence type="inferred from homology"/>
<accession>Q84709</accession>
<comment type="function">
    <text evidence="1">Suppressor of RNA-mediated gene silencing.</text>
</comment>
<comment type="similarity">
    <text evidence="1">Belongs to the polerovirus P0 protein family.</text>
</comment>
<keyword id="KW-0945">Host-virus interaction</keyword>
<keyword id="KW-1090">Inhibition of host innate immune response by virus</keyword>
<keyword id="KW-1185">Reference proteome</keyword>
<keyword id="KW-0941">Suppressor of RNA silencing</keyword>
<keyword id="KW-0899">Viral immunoevasion</keyword>
<organism>
    <name type="scientific">Pea enation mosaic virus-1 (strain WSG)</name>
    <name type="common">PEMV-1</name>
    <dbReference type="NCBI Taxonomy" id="693989"/>
    <lineage>
        <taxon>Viruses</taxon>
        <taxon>Riboviria</taxon>
        <taxon>Orthornavirae</taxon>
        <taxon>Pisuviricota</taxon>
        <taxon>Pisoniviricetes</taxon>
        <taxon>Sobelivirales</taxon>
        <taxon>Solemoviridae</taxon>
        <taxon>Enamovirus</taxon>
        <taxon>Pea enation mosaic virus-1</taxon>
    </lineage>
</organism>
<organismHost>
    <name type="scientific">Cicer arietinum</name>
    <name type="common">Chickpea</name>
    <name type="synonym">Garbanzo</name>
    <dbReference type="NCBI Taxonomy" id="3827"/>
</organismHost>
<organismHost>
    <name type="scientific">Lathyrus odoratus</name>
    <name type="common">Sweet pea</name>
    <dbReference type="NCBI Taxonomy" id="3859"/>
</organismHost>
<organismHost>
    <name type="scientific">Lens culinaris</name>
    <name type="common">Lentil</name>
    <name type="synonym">Cicer lens</name>
    <dbReference type="NCBI Taxonomy" id="3864"/>
</organismHost>
<organismHost>
    <name type="scientific">Medicago arabica</name>
    <dbReference type="NCBI Taxonomy" id="70936"/>
</organismHost>
<organismHost>
    <name type="scientific">Pisum sativum</name>
    <name type="common">Garden pea</name>
    <name type="synonym">Lathyrus oleraceus</name>
    <dbReference type="NCBI Taxonomy" id="3888"/>
</organismHost>
<organismHost>
    <name type="scientific">Trifolium incarnatum</name>
    <name type="common">Crimson clover</name>
    <dbReference type="NCBI Taxonomy" id="60916"/>
</organismHost>
<organismHost>
    <name type="scientific">Vicia faba</name>
    <name type="common">Broad bean</name>
    <name type="synonym">Faba vulgaris</name>
    <dbReference type="NCBI Taxonomy" id="3906"/>
</organismHost>
<organismHost>
    <name type="scientific">Vicia sativa</name>
    <name type="common">Spring vetch</name>
    <name type="synonym">Tare</name>
    <dbReference type="NCBI Taxonomy" id="3908"/>
</organismHost>
<dbReference type="EMBL" id="L04573">
    <property type="protein sequence ID" value="AAA72299.1"/>
    <property type="molecule type" value="Genomic_RNA"/>
</dbReference>
<dbReference type="PIR" id="JQ1382">
    <property type="entry name" value="JQ1382"/>
</dbReference>
<dbReference type="RefSeq" id="NP_619735.1">
    <property type="nucleotide sequence ID" value="NC_003629.1"/>
</dbReference>
<dbReference type="KEGG" id="vg:940251"/>
<dbReference type="Proteomes" id="UP000000519">
    <property type="component" value="Segment"/>
</dbReference>
<dbReference type="GO" id="GO:0052170">
    <property type="term" value="P:symbiont-mediated suppression of host innate immune response"/>
    <property type="evidence" value="ECO:0007669"/>
    <property type="project" value="UniProtKB-KW"/>
</dbReference>
<gene>
    <name type="ORF">ORF0</name>
</gene>